<gene>
    <name type="primary">TCHH</name>
    <name type="synonym">THH</name>
    <name type="synonym">THL</name>
    <name type="synonym">TRHY</name>
</gene>
<proteinExistence type="evidence at protein level"/>
<name>TRHY_HUMAN</name>
<reference key="1">
    <citation type="journal article" date="1993" name="J. Biol. Chem.">
        <title>The structure of human trichohyalin. Potential multiple roles as a functional EF-hand-like calcium-binding protein, a cornified cell envelope precursor, and an intermediate filament-associated (cross-linking) protein.</title>
        <authorList>
            <person name="Lee S.-C."/>
            <person name="Kim I.-G."/>
            <person name="Marekov L.N."/>
            <person name="O'Keefe E.J."/>
            <person name="Parry D.A.D."/>
            <person name="Steinert P.M."/>
        </authorList>
    </citation>
    <scope>NUCLEOTIDE SEQUENCE [GENOMIC DNA]</scope>
    <scope>VARIANTS ARG-63; VAL-1258 AND GLN-1902</scope>
</reference>
<reference key="2">
    <citation type="journal article" date="2006" name="Nature">
        <title>The DNA sequence and biological annotation of human chromosome 1.</title>
        <authorList>
            <person name="Gregory S.G."/>
            <person name="Barlow K.F."/>
            <person name="McLay K.E."/>
            <person name="Kaul R."/>
            <person name="Swarbreck D."/>
            <person name="Dunham A."/>
            <person name="Scott C.E."/>
            <person name="Howe K.L."/>
            <person name="Woodfine K."/>
            <person name="Spencer C.C.A."/>
            <person name="Jones M.C."/>
            <person name="Gillson C."/>
            <person name="Searle S."/>
            <person name="Zhou Y."/>
            <person name="Kokocinski F."/>
            <person name="McDonald L."/>
            <person name="Evans R."/>
            <person name="Phillips K."/>
            <person name="Atkinson A."/>
            <person name="Cooper R."/>
            <person name="Jones C."/>
            <person name="Hall R.E."/>
            <person name="Andrews T.D."/>
            <person name="Lloyd C."/>
            <person name="Ainscough R."/>
            <person name="Almeida J.P."/>
            <person name="Ambrose K.D."/>
            <person name="Anderson F."/>
            <person name="Andrew R.W."/>
            <person name="Ashwell R.I.S."/>
            <person name="Aubin K."/>
            <person name="Babbage A.K."/>
            <person name="Bagguley C.L."/>
            <person name="Bailey J."/>
            <person name="Beasley H."/>
            <person name="Bethel G."/>
            <person name="Bird C.P."/>
            <person name="Bray-Allen S."/>
            <person name="Brown J.Y."/>
            <person name="Brown A.J."/>
            <person name="Buckley D."/>
            <person name="Burton J."/>
            <person name="Bye J."/>
            <person name="Carder C."/>
            <person name="Chapman J.C."/>
            <person name="Clark S.Y."/>
            <person name="Clarke G."/>
            <person name="Clee C."/>
            <person name="Cobley V."/>
            <person name="Collier R.E."/>
            <person name="Corby N."/>
            <person name="Coville G.J."/>
            <person name="Davies J."/>
            <person name="Deadman R."/>
            <person name="Dunn M."/>
            <person name="Earthrowl M."/>
            <person name="Ellington A.G."/>
            <person name="Errington H."/>
            <person name="Frankish A."/>
            <person name="Frankland J."/>
            <person name="French L."/>
            <person name="Garner P."/>
            <person name="Garnett J."/>
            <person name="Gay L."/>
            <person name="Ghori M.R.J."/>
            <person name="Gibson R."/>
            <person name="Gilby L.M."/>
            <person name="Gillett W."/>
            <person name="Glithero R.J."/>
            <person name="Grafham D.V."/>
            <person name="Griffiths C."/>
            <person name="Griffiths-Jones S."/>
            <person name="Grocock R."/>
            <person name="Hammond S."/>
            <person name="Harrison E.S.I."/>
            <person name="Hart E."/>
            <person name="Haugen E."/>
            <person name="Heath P.D."/>
            <person name="Holmes S."/>
            <person name="Holt K."/>
            <person name="Howden P.J."/>
            <person name="Hunt A.R."/>
            <person name="Hunt S.E."/>
            <person name="Hunter G."/>
            <person name="Isherwood J."/>
            <person name="James R."/>
            <person name="Johnson C."/>
            <person name="Johnson D."/>
            <person name="Joy A."/>
            <person name="Kay M."/>
            <person name="Kershaw J.K."/>
            <person name="Kibukawa M."/>
            <person name="Kimberley A.M."/>
            <person name="King A."/>
            <person name="Knights A.J."/>
            <person name="Lad H."/>
            <person name="Laird G."/>
            <person name="Lawlor S."/>
            <person name="Leongamornlert D.A."/>
            <person name="Lloyd D.M."/>
            <person name="Loveland J."/>
            <person name="Lovell J."/>
            <person name="Lush M.J."/>
            <person name="Lyne R."/>
            <person name="Martin S."/>
            <person name="Mashreghi-Mohammadi M."/>
            <person name="Matthews L."/>
            <person name="Matthews N.S.W."/>
            <person name="McLaren S."/>
            <person name="Milne S."/>
            <person name="Mistry S."/>
            <person name="Moore M.J.F."/>
            <person name="Nickerson T."/>
            <person name="O'Dell C.N."/>
            <person name="Oliver K."/>
            <person name="Palmeiri A."/>
            <person name="Palmer S.A."/>
            <person name="Parker A."/>
            <person name="Patel D."/>
            <person name="Pearce A.V."/>
            <person name="Peck A.I."/>
            <person name="Pelan S."/>
            <person name="Phelps K."/>
            <person name="Phillimore B.J."/>
            <person name="Plumb R."/>
            <person name="Rajan J."/>
            <person name="Raymond C."/>
            <person name="Rouse G."/>
            <person name="Saenphimmachak C."/>
            <person name="Sehra H.K."/>
            <person name="Sheridan E."/>
            <person name="Shownkeen R."/>
            <person name="Sims S."/>
            <person name="Skuce C.D."/>
            <person name="Smith M."/>
            <person name="Steward C."/>
            <person name="Subramanian S."/>
            <person name="Sycamore N."/>
            <person name="Tracey A."/>
            <person name="Tromans A."/>
            <person name="Van Helmond Z."/>
            <person name="Wall M."/>
            <person name="Wallis J.M."/>
            <person name="White S."/>
            <person name="Whitehead S.L."/>
            <person name="Wilkinson J.E."/>
            <person name="Willey D.L."/>
            <person name="Williams H."/>
            <person name="Wilming L."/>
            <person name="Wray P.W."/>
            <person name="Wu Z."/>
            <person name="Coulson A."/>
            <person name="Vaudin M."/>
            <person name="Sulston J.E."/>
            <person name="Durbin R.M."/>
            <person name="Hubbard T."/>
            <person name="Wooster R."/>
            <person name="Dunham I."/>
            <person name="Carter N.P."/>
            <person name="McVean G."/>
            <person name="Ross M.T."/>
            <person name="Harrow J."/>
            <person name="Olson M.V."/>
            <person name="Beck S."/>
            <person name="Rogers J."/>
            <person name="Bentley D.R."/>
        </authorList>
    </citation>
    <scope>NUCLEOTIDE SEQUENCE [LARGE SCALE GENOMIC DNA]</scope>
</reference>
<reference key="3">
    <citation type="journal article" date="1993" name="J. Invest. Dermatol.">
        <title>Trichohyalin: a structural protein of hair, tongue, nail, and epidermis.</title>
        <authorList>
            <person name="O'Keefe E.J."/>
            <person name="Hamilton E.H."/>
            <person name="Lee S.-C."/>
            <person name="Steinert P.M."/>
        </authorList>
    </citation>
    <scope>PRELIMINARY NUCLEOTIDE SEQUENCE [GENOMIC DNA] OF 1776-1943</scope>
    <scope>CHARACTERIZATION</scope>
</reference>
<reference key="4">
    <citation type="journal article" date="2016" name="Am. J. Hum. Genet.">
        <title>Mutations in three genes encoding proteins involved in hair shaft formation cause uncombable hair syndrome.</title>
        <authorList>
            <person name="Ue Basmanav F.B."/>
            <person name="Cau L."/>
            <person name="Tafazzoli A."/>
            <person name="Mechin M.C."/>
            <person name="Wolf S."/>
            <person name="Romano M.T."/>
            <person name="Valentin F."/>
            <person name="Wiegmann H."/>
            <person name="Huchenq A."/>
            <person name="Kandil R."/>
            <person name="Garcia Bartels N."/>
            <person name="Kilic A."/>
            <person name="George S."/>
            <person name="Ralser D.J."/>
            <person name="Bergner S."/>
            <person name="Ferguson D.J."/>
            <person name="Oprisoreanu A.M."/>
            <person name="Wehner M."/>
            <person name="Thiele H."/>
            <person name="Altmueller J."/>
            <person name="Nuernberg P."/>
            <person name="Swan D."/>
            <person name="Houniet D."/>
            <person name="Buechner A."/>
            <person name="Weibel L."/>
            <person name="Wagner N."/>
            <person name="Grimalt R."/>
            <person name="Bygum A."/>
            <person name="Serre G."/>
            <person name="Blume-Peytavi U."/>
            <person name="Sprecher E."/>
            <person name="Schoch S."/>
            <person name="Oji V."/>
            <person name="Hamm H."/>
            <person name="Farrant P."/>
            <person name="Simon M."/>
            <person name="Betz R.C."/>
        </authorList>
    </citation>
    <scope>INVOLVEMENT IN UHS3</scope>
</reference>
<reference key="5">
    <citation type="journal article" date="2011" name="Nature">
        <title>Exome sequencing identifies frequent mutation of the SWI/SNF complex gene PBRM1 in renal carcinoma.</title>
        <authorList>
            <person name="Varela I."/>
            <person name="Tarpey P."/>
            <person name="Raine K."/>
            <person name="Huang D."/>
            <person name="Ong C.K."/>
            <person name="Stephens P."/>
            <person name="Davies H."/>
            <person name="Jones D."/>
            <person name="Lin M.L."/>
            <person name="Teague J."/>
            <person name="Bignell G."/>
            <person name="Butler A."/>
            <person name="Cho J."/>
            <person name="Dalgliesh G.L."/>
            <person name="Galappaththige D."/>
            <person name="Greenman C."/>
            <person name="Hardy C."/>
            <person name="Jia M."/>
            <person name="Latimer C."/>
            <person name="Lau K.W."/>
            <person name="Marshall J."/>
            <person name="McLaren S."/>
            <person name="Menzies A."/>
            <person name="Mudie L."/>
            <person name="Stebbings L."/>
            <person name="Largaespada D.A."/>
            <person name="Wessels L.F.A."/>
            <person name="Richard S."/>
            <person name="Kahnoski R.J."/>
            <person name="Anema J."/>
            <person name="Tuveson D.A."/>
            <person name="Perez-Mancera P.A."/>
            <person name="Mustonen V."/>
            <person name="Fischer A."/>
            <person name="Adams D.J."/>
            <person name="Rust A."/>
            <person name="Chan-On W."/>
            <person name="Subimerb C."/>
            <person name="Dykema K."/>
            <person name="Furge K."/>
            <person name="Campbell P.J."/>
            <person name="Teh B.T."/>
            <person name="Stratton M.R."/>
            <person name="Futreal P.A."/>
        </authorList>
    </citation>
    <scope>VARIANT PRO-1400</scope>
</reference>
<comment type="function">
    <text>Intermediate filament-associated protein that associates in regular arrays with keratin intermediate filaments (KIF) of the inner root sheath cells of the hair follicle and the granular layer of the epidermis. It later becomes cross-linked to KIF by isodipeptide bonds. It may serve as scaffold protein, together with involucrin, in the organization of the cell envelope or even anchor the cell envelope to the KIF network. It may be involved in its own calcium-dependent postsynthetic processing during terminal differentiation.</text>
</comment>
<comment type="subunit">
    <text evidence="6">Monomer.</text>
</comment>
<comment type="tissue specificity">
    <text>Found in the hard keratinizing tissues such as the inner root sheath (IRS) of hair follicles and medulla, and in the filiform papillae of dorsal tongue epithelium.</text>
</comment>
<comment type="developmental stage">
    <text>Expressed during late differentiation of the epidermis.</text>
</comment>
<comment type="domain">
    <text>Consists of nine domains. Domain 1 contains two EF-hand calcium-binding domains. Domains 2-4, 6, and 8 are almost entirely alpha-helical, configured as a series of peptide repeats of varying regularity, and are thought to form a single-stranded alpha-helical rod stabilized by ionic interactions. Domain 6 is the most regular and may bind KIF directly by ionic interactions. Domains 5 and 7 are less well organized and may induce folds in the molecule. Domain 9 contains the C-terminus, conserved among different species.</text>
</comment>
<comment type="PTM">
    <text>Substrate of transglutaminase. Some 200 arginines are probably converted to citrullines by peptidylarginine deimidase.</text>
</comment>
<comment type="disease" evidence="4">
    <disease id="DI-04897">
        <name>Uncombable hair syndrome 3</name>
        <acronym>UHS3</acronym>
        <description>A form of uncombable hair syndrome, a condition characterized by scalp hair that is impossible to comb due to the haphazard arrangement of the hair bundles. A characteristic morphologic feature is a triangular to reniform to heart shape on cross-sections, and a groove, canal or flattening along the entire length of the hair. Most individuals are affected early in childhood and the hair takes on a spun-glass appearance with the hair becoming dry, curly, glossy, lighter in color, and progressively uncombable. The hair growth rate can range from slow to normal, and the condition improves with age.</description>
        <dbReference type="MIM" id="617252"/>
    </disease>
    <text>The disease is caused by variants affecting the gene represented in this entry.</text>
</comment>
<comment type="similarity">
    <text evidence="6">Belongs to the S100-fused protein family.</text>
</comment>
<comment type="sequence caution" evidence="6">
    <conflict type="erroneous gene model prediction">
        <sequence resource="EMBL-CDS" id="AAA65582"/>
    </conflict>
</comment>
<evidence type="ECO:0000255" key="1">
    <source>
        <dbReference type="PROSITE-ProRule" id="PRU00448"/>
    </source>
</evidence>
<evidence type="ECO:0000256" key="2">
    <source>
        <dbReference type="SAM" id="MobiDB-lite"/>
    </source>
</evidence>
<evidence type="ECO:0000269" key="3">
    <source>
    </source>
</evidence>
<evidence type="ECO:0000269" key="4">
    <source>
    </source>
</evidence>
<evidence type="ECO:0000269" key="5">
    <source>
    </source>
</evidence>
<evidence type="ECO:0000305" key="6"/>
<sequence>MSPLLRSICDITEIFNQYVSHDCDGAALTKKDLKNLLEREFGAVLRRPHDPKTVDLILELLDLDSNGRVDFNEFLLFIFKVAQACYYALGQATGLDEEKRARCDGKESLLQDRRQEEDQRRFEPRDRQLEEEPGQRRRQKRQEQERELAEGEEQSEKQERLEQRDRQRRDEELWRQRQEWQEREERRAEEEQLQSCKGHETEEFPDEEQLRRRELLELRRKGREEKQQQRRERQDRVFQEEEEKEWRKRETVLRKEEEKLQEEEPQRQRELQEEEEQLRKLERQELRRERQEEEQQQQRLRREQQLRRKQEEERREQQEERREQQERREQQEERREQQLRREQEERREQQLRREQEEERREQQLRREQEEERREQQLRREQQLRREQQLRREQQLRREQQLRREQQLRREQQLRREQQLRREQQLRREQEEERHEQKHEQERREQRLKREQEERRDWLKREEETERHEQERRKQQLKRDQEEERRERWLKLEEEERREQQERREQQLRREQEERREQRLKRQEEEERLQQRLRSEQQLRREQEERREQLLKREEEKRLEQERREQRLKREQEERRDQLLKREEERRQQRLKREQEERLEQRLKREEVERLEQEERREQRLKREEPEEERRQQLLKSEEQEERRQQQLRREQQERREQRLKREEEEERLEQRLKREHEEERREQELAEEEQEQARERIKSRIPKWQWQLESEADARQSKVYSRPRKQEGQRRRQEQEEKRRRRESELQWQEEERAHRQQQEEEQRRDFTWQWQAEEKSERGRQRLSARPPLREQRERQLRAEERQQREQRFLPEEEEKEQRRRQRREREKELQFLEEEEQLQRRERAQQLQEEEDGLQEDQERRRSQEQRRDQKWRWQLEEERKRRRHTLYAKPALQEQLRKEQQLLQEEEEELQREEREKRRRQEQERQYREEEQLQQEEEQLLREEREKRRRQERERQYRKDKKLQQKEEQLLGEEPEKRRRQEREKKYREEEELQQEEEQLLREEREKRRRQEWERQYRKKDELQQEEEQLLREEREKRRLQERERQYREEEELQQEEEQLLGEERETRRRQELERQYRKEEELQQEEEQLLREEPEKRRRQERERQCREEEELQQEEEQLLREEREKRRRQELERQYREEEEVQQEEEQLLREEPEKRRRQELERQYREEEELQQEEEQLLREEQEKRRQERERQYREEEELQRQKRKQRYRDEDQRSDLKWQWEPEKENAVRDNKVYCKGRENEQFRQLEDSQLRDRQSQQDLQHLLGEQQERDREQERRRWQQRDRHFPEEEQLEREEQKEAKRRDRKSQEEKQLLREEREEKRRRQETDRKFREEEQLLQEREEQPLRRQERDRKFREEELRHQEQGRKFLEEEQRLRRQERERKFLKEEQQLRCQEREQQLRQDRDRKFREEEQQLSRQERDRKFREEEQQVRRQERERKFLEEEQQLRQERHRKFREEEQLLQEREEQQLHRQERDRKFLEEEQQLRRQERDRKFREQELRSQEPERKFLEEEQQLHRQQRQRKFLQEEQQLRRQERGQQRRQDRDRKFREEEQLRQEREEQQLSRQERDRKFRLEEQKVRRQEQERKFMEDEQQLRRQEGQQQLRQERDRKFREDEQLLQEREEQQLHRQERDRKFLEEEPQLRRQEREQQLRHDRDRKFREEEQLLQEGEEQQLRRQERDRKFREEEQQLRRQERERKFLQEEQQLRRQELERKFREEEQLRQETEQEQLRRQERYRKILEEEQLRPEREEQQLRRQERDRKFREEEQLRQEREEQQLRSQESDRKFREEEQLRQEREEQQLRPQQRDGKYRWEEEQLQLEEQEQRLRQERDRQYRAEEQFATQEKSRREEQELWQEEEQKRRQERERKLREEHIRRQQKEEQRHRQVGEIKSQEGKGHGRLLEPGTHQFASVPVRSSPLYEYIQEQRSQYRP</sequence>
<keyword id="KW-0106">Calcium</keyword>
<keyword id="KW-0164">Citrullination</keyword>
<keyword id="KW-0417">Keratinization</keyword>
<keyword id="KW-0479">Metal-binding</keyword>
<keyword id="KW-1267">Proteomics identification</keyword>
<keyword id="KW-1185">Reference proteome</keyword>
<keyword id="KW-0677">Repeat</keyword>
<protein>
    <recommendedName>
        <fullName>Trichohyalin</fullName>
    </recommendedName>
</protein>
<feature type="chain" id="PRO_0000144042" description="Trichohyalin">
    <location>
        <begin position="1"/>
        <end position="1943"/>
    </location>
</feature>
<feature type="domain" description="EF-hand 1" evidence="6">
    <location>
        <begin position="23"/>
        <end position="48"/>
    </location>
</feature>
<feature type="domain" description="EF-hand 2" evidence="1">
    <location>
        <begin position="49"/>
        <end position="84"/>
    </location>
</feature>
<feature type="repeat" description="1-1; approximate">
    <location>
        <begin position="314"/>
        <end position="326"/>
    </location>
</feature>
<feature type="repeat" description="1-2; approximate">
    <location>
        <begin position="327"/>
        <end position="339"/>
    </location>
</feature>
<feature type="repeat" description="1-3; approximate">
    <location>
        <begin position="340"/>
        <end position="351"/>
    </location>
</feature>
<feature type="repeat" description="1-4">
    <location>
        <begin position="352"/>
        <end position="364"/>
    </location>
</feature>
<feature type="repeat" description="1-5">
    <location>
        <begin position="365"/>
        <end position="377"/>
    </location>
</feature>
<feature type="repeat" description="2-1">
    <location>
        <begin position="378"/>
        <end position="383"/>
    </location>
</feature>
<feature type="repeat" description="2-2">
    <location>
        <begin position="384"/>
        <end position="389"/>
    </location>
</feature>
<feature type="repeat" description="2-3">
    <location>
        <begin position="390"/>
        <end position="395"/>
    </location>
</feature>
<feature type="repeat" description="2-4">
    <location>
        <begin position="396"/>
        <end position="401"/>
    </location>
</feature>
<feature type="repeat" description="2-5">
    <location>
        <begin position="402"/>
        <end position="407"/>
    </location>
</feature>
<feature type="repeat" description="2-6">
    <location>
        <begin position="408"/>
        <end position="413"/>
    </location>
</feature>
<feature type="repeat" description="2-7">
    <location>
        <begin position="414"/>
        <end position="419"/>
    </location>
</feature>
<feature type="repeat" description="2-8">
    <location>
        <begin position="420"/>
        <end position="425"/>
    </location>
</feature>
<feature type="repeat" description="4-1">
    <location>
        <begin position="906"/>
        <end position="935"/>
    </location>
</feature>
<feature type="repeat" description="4-2">
    <location>
        <begin position="936"/>
        <end position="965"/>
    </location>
</feature>
<feature type="repeat" description="4-3">
    <location>
        <begin position="966"/>
        <end position="995"/>
    </location>
</feature>
<feature type="repeat" description="4-4">
    <location>
        <begin position="996"/>
        <end position="1025"/>
    </location>
</feature>
<feature type="repeat" description="4-5">
    <location>
        <begin position="1026"/>
        <end position="1055"/>
    </location>
</feature>
<feature type="repeat" description="4-6">
    <location>
        <begin position="1056"/>
        <end position="1085"/>
    </location>
</feature>
<feature type="repeat" description="4-7">
    <location>
        <begin position="1086"/>
        <end position="1115"/>
    </location>
</feature>
<feature type="repeat" description="4-8">
    <location>
        <begin position="1116"/>
        <end position="1145"/>
    </location>
</feature>
<feature type="repeat" description="4-9">
    <location>
        <begin position="1146"/>
        <end position="1175"/>
    </location>
</feature>
<feature type="repeat" description="4-10">
    <location>
        <begin position="1176"/>
        <end position="1204"/>
    </location>
</feature>
<feature type="region of interest" description="S-100-like">
    <location>
        <begin position="1"/>
        <end position="91"/>
    </location>
</feature>
<feature type="region of interest" description="Disordered" evidence="2">
    <location>
        <begin position="110"/>
        <end position="164"/>
    </location>
</feature>
<feature type="region of interest" description="Disordered" evidence="2">
    <location>
        <begin position="186"/>
        <end position="209"/>
    </location>
</feature>
<feature type="region of interest" description="Disordered" evidence="2">
    <location>
        <begin position="222"/>
        <end position="274"/>
    </location>
</feature>
<feature type="region of interest" description="5 X 13 AA tandem repeats of R-R-E-Q-E-E-E-R-R-E-Q-Q-L">
    <location>
        <begin position="314"/>
        <end position="377"/>
    </location>
</feature>
<feature type="region of interest" description="8 X 6 AA tandem repeats of R-R-E-Q-Q-L">
    <location>
        <begin position="378"/>
        <end position="425"/>
    </location>
</feature>
<feature type="region of interest" description="9 X 28 AA approximate tandem repeats">
    <location>
        <begin position="425"/>
        <end position="683"/>
    </location>
</feature>
<feature type="region of interest" description="Disordered" evidence="2">
    <location>
        <begin position="426"/>
        <end position="485"/>
    </location>
</feature>
<feature type="region of interest" description="Disordered" evidence="2">
    <location>
        <begin position="509"/>
        <end position="546"/>
    </location>
</feature>
<feature type="region of interest" description="Disordered" evidence="2">
    <location>
        <begin position="608"/>
        <end position="819"/>
    </location>
</feature>
<feature type="region of interest" description="Disordered" evidence="2">
    <location>
        <begin position="837"/>
        <end position="872"/>
    </location>
</feature>
<feature type="region of interest" description="10 X 30 AA tandem repeats">
    <location>
        <begin position="906"/>
        <end position="1204"/>
    </location>
</feature>
<feature type="region of interest" description="Disordered" evidence="2">
    <location>
        <begin position="950"/>
        <end position="1000"/>
    </location>
</feature>
<feature type="region of interest" description="Disordered" evidence="2">
    <location>
        <begin position="1046"/>
        <end position="1120"/>
    </location>
</feature>
<feature type="region of interest" description="Disordered" evidence="2">
    <location>
        <begin position="1137"/>
        <end position="1162"/>
    </location>
</feature>
<feature type="region of interest" description="Disordered" evidence="2">
    <location>
        <begin position="1193"/>
        <end position="1371"/>
    </location>
</feature>
<feature type="region of interest" description="23 X 26 AA approximate tandem repeats">
    <location>
        <begin position="1292"/>
        <end position="1894"/>
    </location>
</feature>
<feature type="region of interest" description="Disordered" evidence="2">
    <location>
        <begin position="1404"/>
        <end position="1435"/>
    </location>
</feature>
<feature type="region of interest" description="Disordered" evidence="2">
    <location>
        <begin position="1492"/>
        <end position="1691"/>
    </location>
</feature>
<feature type="region of interest" description="Disordered" evidence="2">
    <location>
        <begin position="1757"/>
        <end position="1820"/>
    </location>
</feature>
<feature type="region of interest" description="Disordered" evidence="2">
    <location>
        <begin position="1834"/>
        <end position="1864"/>
    </location>
</feature>
<feature type="region of interest" description="Disordered" evidence="2">
    <location>
        <begin position="1876"/>
        <end position="1928"/>
    </location>
</feature>
<feature type="compositionally biased region" description="Basic and acidic residues" evidence="2">
    <location>
        <begin position="197"/>
        <end position="209"/>
    </location>
</feature>
<feature type="compositionally biased region" description="Basic and acidic residues" evidence="2">
    <location>
        <begin position="608"/>
        <end position="684"/>
    </location>
</feature>
<feature type="compositionally biased region" description="Basic and acidic residues" evidence="2">
    <location>
        <begin position="724"/>
        <end position="781"/>
    </location>
</feature>
<feature type="compositionally biased region" description="Basic and acidic residues" evidence="2">
    <location>
        <begin position="789"/>
        <end position="812"/>
    </location>
</feature>
<feature type="compositionally biased region" description="Basic and acidic residues" evidence="2">
    <location>
        <begin position="859"/>
        <end position="872"/>
    </location>
</feature>
<feature type="compositionally biased region" description="Basic and acidic residues" evidence="2">
    <location>
        <begin position="950"/>
        <end position="992"/>
    </location>
</feature>
<feature type="compositionally biased region" description="Acidic residues" evidence="2">
    <location>
        <begin position="1052"/>
        <end position="1064"/>
    </location>
</feature>
<feature type="compositionally biased region" description="Basic and acidic residues" evidence="2">
    <location>
        <begin position="1065"/>
        <end position="1085"/>
    </location>
</feature>
<feature type="compositionally biased region" description="Basic and acidic residues" evidence="2">
    <location>
        <begin position="1092"/>
        <end position="1111"/>
    </location>
</feature>
<feature type="compositionally biased region" description="Acidic residues" evidence="2">
    <location>
        <begin position="1142"/>
        <end position="1151"/>
    </location>
</feature>
<feature type="compositionally biased region" description="Basic and acidic residues" evidence="2">
    <location>
        <begin position="1152"/>
        <end position="1162"/>
    </location>
</feature>
<feature type="compositionally biased region" description="Basic and acidic residues" evidence="2">
    <location>
        <begin position="1214"/>
        <end position="1263"/>
    </location>
</feature>
<feature type="compositionally biased region" description="Basic and acidic residues" evidence="2">
    <location>
        <begin position="1274"/>
        <end position="1371"/>
    </location>
</feature>
<feature type="compositionally biased region" description="Basic and acidic residues" evidence="2">
    <location>
        <begin position="1492"/>
        <end position="1524"/>
    </location>
</feature>
<feature type="compositionally biased region" description="Basic and acidic residues" evidence="2">
    <location>
        <begin position="1533"/>
        <end position="1673"/>
    </location>
</feature>
<feature type="compositionally biased region" description="Basic and acidic residues" evidence="2">
    <location>
        <begin position="1682"/>
        <end position="1691"/>
    </location>
</feature>
<feature type="compositionally biased region" description="Basic and acidic residues" evidence="2">
    <location>
        <begin position="1876"/>
        <end position="1912"/>
    </location>
</feature>
<feature type="binding site" evidence="6">
    <location>
        <position position="32"/>
    </location>
    <ligand>
        <name>Ca(2+)</name>
        <dbReference type="ChEBI" id="CHEBI:29108"/>
        <label>1</label>
        <note>low affinity</note>
    </ligand>
</feature>
<feature type="binding site" evidence="1">
    <location>
        <position position="62"/>
    </location>
    <ligand>
        <name>Ca(2+)</name>
        <dbReference type="ChEBI" id="CHEBI:29108"/>
        <label>2</label>
        <note>high affinity</note>
    </ligand>
</feature>
<feature type="binding site" evidence="1">
    <location>
        <position position="64"/>
    </location>
    <ligand>
        <name>Ca(2+)</name>
        <dbReference type="ChEBI" id="CHEBI:29108"/>
        <label>2</label>
        <note>high affinity</note>
    </ligand>
</feature>
<feature type="binding site" evidence="1">
    <location>
        <position position="66"/>
    </location>
    <ligand>
        <name>Ca(2+)</name>
        <dbReference type="ChEBI" id="CHEBI:29108"/>
        <label>2</label>
        <note>high affinity</note>
    </ligand>
</feature>
<feature type="binding site" evidence="1">
    <location>
        <position position="68"/>
    </location>
    <ligand>
        <name>Ca(2+)</name>
        <dbReference type="ChEBI" id="CHEBI:29108"/>
        <label>2</label>
        <note>high affinity</note>
    </ligand>
</feature>
<feature type="binding site" evidence="1">
    <location>
        <position position="73"/>
    </location>
    <ligand>
        <name>Ca(2+)</name>
        <dbReference type="ChEBI" id="CHEBI:29108"/>
        <label>2</label>
        <note>high affinity</note>
    </ligand>
</feature>
<feature type="sequence variant" id="VAR_047519" description="In dbSNP:rs2515663." evidence="5">
    <original>L</original>
    <variation>R</variation>
    <location>
        <position position="63"/>
    </location>
</feature>
<feature type="sequence variant" id="VAR_047520" description="In dbSNP:rs3134814.">
    <original>V</original>
    <variation>L</variation>
    <location>
        <position position="237"/>
    </location>
</feature>
<feature type="sequence variant" id="VAR_047521" description="In dbSNP:rs6680692.">
    <original>R</original>
    <variation>S</variation>
    <location>
        <position position="552"/>
    </location>
</feature>
<feature type="sequence variant" id="VAR_047522" description="In dbSNP:rs11803731.">
    <original>L</original>
    <variation>M</variation>
    <location>
        <position position="790"/>
    </location>
</feature>
<feature type="sequence variant" id="VAR_047523" description="In dbSNP:rs2496253." evidence="5">
    <original>L</original>
    <variation>V</variation>
    <location>
        <position position="1258"/>
    </location>
</feature>
<feature type="sequence variant" id="VAR_064757" description="Found in a renal cell carcinoma sample; somatic mutation." evidence="3">
    <original>R</original>
    <variation>P</variation>
    <location>
        <position position="1400"/>
    </location>
</feature>
<feature type="sequence variant" id="VAR_047524" description="In dbSNP:rs1131471." evidence="5">
    <original>K</original>
    <variation>Q</variation>
    <location>
        <position position="1902"/>
    </location>
</feature>
<feature type="sequence conflict" description="In Ref. 1; AAA65582." evidence="6" ref="1">
    <original>Q</original>
    <variation>T</variation>
    <location>
        <position position="115"/>
    </location>
</feature>
<feature type="sequence conflict" description="In Ref. 1; AAA65582." evidence="6" ref="1">
    <original>R</original>
    <variation>L</variation>
    <location>
        <position position="546"/>
    </location>
</feature>
<feature type="sequence conflict" description="In Ref. 1; AAA65582." evidence="6" ref="1">
    <original>EQ</original>
    <variation>DE</variation>
    <location>
        <begin position="617"/>
        <end position="618"/>
    </location>
</feature>
<feature type="sequence conflict" description="In Ref. 1; AAA65582." evidence="6" ref="1">
    <original>QQ</original>
    <variation>HE</variation>
    <location>
        <begin position="631"/>
        <end position="632"/>
    </location>
</feature>
<feature type="sequence conflict" description="In Ref. 1; AAA65582." evidence="6" ref="1">
    <original>QQ</original>
    <variation>HE</variation>
    <location>
        <begin position="644"/>
        <end position="645"/>
    </location>
</feature>
<feature type="sequence conflict" description="In Ref. 1; AAA65582." evidence="6" ref="1">
    <original>R</original>
    <variation>G</variation>
    <location>
        <position position="821"/>
    </location>
</feature>
<feature type="sequence conflict" description="In Ref. 1; AAA65582." evidence="6" ref="1">
    <location>
        <position position="865"/>
    </location>
</feature>
<feature type="sequence conflict" description="In Ref. 1; AAA65582." evidence="6" ref="1">
    <original>RD</original>
    <variation>AN</variation>
    <location>
        <begin position="1289"/>
        <end position="1290"/>
    </location>
</feature>
<feature type="sequence conflict" description="In Ref. 1; AAA65582." evidence="6" ref="1">
    <original>R</original>
    <variation>L</variation>
    <location>
        <position position="1354"/>
    </location>
</feature>
<feature type="sequence conflict" description="In Ref. 1; AAA65582." evidence="6" ref="1">
    <original>R</original>
    <variation>L</variation>
    <location>
        <position position="1368"/>
    </location>
</feature>
<feature type="sequence conflict" description="In Ref. 1; AAA65582." evidence="6" ref="1">
    <original>RQ</original>
    <variation>E</variation>
    <location>
        <begin position="1385"/>
        <end position="1386"/>
    </location>
</feature>
<feature type="sequence conflict" description="In Ref. 1; AAA65582." evidence="6" ref="1">
    <original>CQ</original>
    <variation>LE</variation>
    <location>
        <begin position="1401"/>
        <end position="1402"/>
    </location>
</feature>
<feature type="sequence conflict" description="In Ref. 1; AAA65582." evidence="6" ref="1">
    <location>
        <position position="1406"/>
    </location>
</feature>
<feature type="sequence conflict" description="In Ref. 1; AAA65582." evidence="6" ref="1">
    <location>
        <position position="1617"/>
    </location>
</feature>
<feature type="sequence conflict" description="In Ref. 1; AAA65582." evidence="6" ref="1">
    <original>E</original>
    <variation>G</variation>
    <location>
        <position position="1782"/>
    </location>
</feature>
<organism>
    <name type="scientific">Homo sapiens</name>
    <name type="common">Human</name>
    <dbReference type="NCBI Taxonomy" id="9606"/>
    <lineage>
        <taxon>Eukaryota</taxon>
        <taxon>Metazoa</taxon>
        <taxon>Chordata</taxon>
        <taxon>Craniata</taxon>
        <taxon>Vertebrata</taxon>
        <taxon>Euteleostomi</taxon>
        <taxon>Mammalia</taxon>
        <taxon>Eutheria</taxon>
        <taxon>Euarchontoglires</taxon>
        <taxon>Primates</taxon>
        <taxon>Haplorrhini</taxon>
        <taxon>Catarrhini</taxon>
        <taxon>Hominidae</taxon>
        <taxon>Homo</taxon>
    </lineage>
</organism>
<dbReference type="EMBL" id="L09190">
    <property type="protein sequence ID" value="AAA65582.1"/>
    <property type="status" value="ALT_SEQ"/>
    <property type="molecule type" value="Genomic_DNA"/>
</dbReference>
<dbReference type="EMBL" id="AL589986">
    <property type="status" value="NOT_ANNOTATED_CDS"/>
    <property type="molecule type" value="Genomic_DNA"/>
</dbReference>
<dbReference type="CCDS" id="CCDS41396.1"/>
<dbReference type="PIR" id="A45973">
    <property type="entry name" value="A45973"/>
</dbReference>
<dbReference type="RefSeq" id="NP_009044.2">
    <property type="nucleotide sequence ID" value="NM_007113.3"/>
</dbReference>
<dbReference type="SMR" id="Q07283"/>
<dbReference type="BioGRID" id="112919">
    <property type="interactions" value="18"/>
</dbReference>
<dbReference type="FunCoup" id="Q07283">
    <property type="interactions" value="61"/>
</dbReference>
<dbReference type="IntAct" id="Q07283">
    <property type="interactions" value="9"/>
</dbReference>
<dbReference type="STRING" id="9606.ENSP00000480484"/>
<dbReference type="CarbonylDB" id="Q07283"/>
<dbReference type="GlyGen" id="Q07283">
    <property type="glycosylation" value="1 site, 1 O-linked glycan (1 site)"/>
</dbReference>
<dbReference type="iPTMnet" id="Q07283"/>
<dbReference type="PhosphoSitePlus" id="Q07283"/>
<dbReference type="BioMuta" id="TCHH"/>
<dbReference type="DMDM" id="215273930"/>
<dbReference type="jPOST" id="Q07283"/>
<dbReference type="MassIVE" id="Q07283"/>
<dbReference type="PaxDb" id="9606-ENSP00000480484"/>
<dbReference type="PeptideAtlas" id="Q07283"/>
<dbReference type="ProteomicsDB" id="58508"/>
<dbReference type="Pumba" id="Q07283"/>
<dbReference type="Antibodypedia" id="34083">
    <property type="antibodies" value="46 antibodies from 16 providers"/>
</dbReference>
<dbReference type="DNASU" id="7062"/>
<dbReference type="Ensembl" id="ENST00000614923.2">
    <property type="protein sequence ID" value="ENSP00000480484.1"/>
    <property type="gene ID" value="ENSG00000159450.13"/>
</dbReference>
<dbReference type="GeneID" id="7062"/>
<dbReference type="KEGG" id="hsa:7062"/>
<dbReference type="MANE-Select" id="ENST00000614923.2">
    <property type="protein sequence ID" value="ENSP00000480484.1"/>
    <property type="RefSeq nucleotide sequence ID" value="NM_007113.4"/>
    <property type="RefSeq protein sequence ID" value="NP_009044.2"/>
</dbReference>
<dbReference type="UCSC" id="uc001ezp.3">
    <property type="organism name" value="human"/>
</dbReference>
<dbReference type="AGR" id="HGNC:11791"/>
<dbReference type="CTD" id="7062"/>
<dbReference type="DisGeNET" id="7062"/>
<dbReference type="GeneCards" id="TCHH"/>
<dbReference type="HGNC" id="HGNC:11791">
    <property type="gene designation" value="TCHH"/>
</dbReference>
<dbReference type="HPA" id="ENSG00000159450">
    <property type="expression patterns" value="Tissue enriched (skin)"/>
</dbReference>
<dbReference type="MalaCards" id="TCHH"/>
<dbReference type="MIM" id="190370">
    <property type="type" value="gene"/>
</dbReference>
<dbReference type="MIM" id="617252">
    <property type="type" value="phenotype"/>
</dbReference>
<dbReference type="neXtProt" id="NX_Q07283"/>
<dbReference type="OpenTargets" id="ENSG00000159450"/>
<dbReference type="PharmGKB" id="PA36503"/>
<dbReference type="VEuPathDB" id="HostDB:ENSG00000159450"/>
<dbReference type="eggNOG" id="ENOG502QQH0">
    <property type="taxonomic scope" value="Eukaryota"/>
</dbReference>
<dbReference type="GeneTree" id="ENSGT00940000164620"/>
<dbReference type="HOGENOM" id="CLU_001958_0_0_1"/>
<dbReference type="InParanoid" id="Q07283"/>
<dbReference type="OMA" id="EQRDGQY"/>
<dbReference type="OrthoDB" id="26525at2759"/>
<dbReference type="PAN-GO" id="Q07283">
    <property type="GO annotations" value="1 GO annotation based on evolutionary models"/>
</dbReference>
<dbReference type="TreeFam" id="TF344077"/>
<dbReference type="PathwayCommons" id="Q07283"/>
<dbReference type="Reactome" id="R-HSA-6809371">
    <property type="pathway name" value="Formation of the cornified envelope"/>
</dbReference>
<dbReference type="SignaLink" id="Q07283"/>
<dbReference type="BioGRID-ORCS" id="7062">
    <property type="hits" value="12 hits in 1140 CRISPR screens"/>
</dbReference>
<dbReference type="ChiTaRS" id="TCHH">
    <property type="organism name" value="human"/>
</dbReference>
<dbReference type="GeneWiki" id="TCHH"/>
<dbReference type="GenomeRNAi" id="7062"/>
<dbReference type="Pharos" id="Q07283">
    <property type="development level" value="Tbio"/>
</dbReference>
<dbReference type="PRO" id="PR:Q07283"/>
<dbReference type="Proteomes" id="UP000005640">
    <property type="component" value="Chromosome 1"/>
</dbReference>
<dbReference type="RNAct" id="Q07283">
    <property type="molecule type" value="protein"/>
</dbReference>
<dbReference type="Bgee" id="ENSG00000159450">
    <property type="expression patterns" value="Expressed in upper arm skin and 77 other cell types or tissues"/>
</dbReference>
<dbReference type="GO" id="GO:0001533">
    <property type="term" value="C:cornified envelope"/>
    <property type="evidence" value="ECO:0000304"/>
    <property type="project" value="Reactome"/>
</dbReference>
<dbReference type="GO" id="GO:0005856">
    <property type="term" value="C:cytoskeleton"/>
    <property type="evidence" value="ECO:0000303"/>
    <property type="project" value="UniProtKB"/>
</dbReference>
<dbReference type="GO" id="GO:0005829">
    <property type="term" value="C:cytosol"/>
    <property type="evidence" value="ECO:0000304"/>
    <property type="project" value="Reactome"/>
</dbReference>
<dbReference type="GO" id="GO:0005509">
    <property type="term" value="F:calcium ion binding"/>
    <property type="evidence" value="ECO:0000304"/>
    <property type="project" value="UniProtKB"/>
</dbReference>
<dbReference type="GO" id="GO:0046914">
    <property type="term" value="F:transition metal ion binding"/>
    <property type="evidence" value="ECO:0007669"/>
    <property type="project" value="InterPro"/>
</dbReference>
<dbReference type="GO" id="GO:0045109">
    <property type="term" value="P:intermediate filament organization"/>
    <property type="evidence" value="ECO:0000318"/>
    <property type="project" value="GO_Central"/>
</dbReference>
<dbReference type="GO" id="GO:0031424">
    <property type="term" value="P:keratinization"/>
    <property type="evidence" value="ECO:0007669"/>
    <property type="project" value="UniProtKB-KW"/>
</dbReference>
<dbReference type="CDD" id="cd00213">
    <property type="entry name" value="S-100"/>
    <property type="match status" value="1"/>
</dbReference>
<dbReference type="Gene3D" id="1.10.238.10">
    <property type="entry name" value="EF-hand"/>
    <property type="match status" value="1"/>
</dbReference>
<dbReference type="InterPro" id="IPR011992">
    <property type="entry name" value="EF-hand-dom_pair"/>
</dbReference>
<dbReference type="InterPro" id="IPR018247">
    <property type="entry name" value="EF_Hand_1_Ca_BS"/>
</dbReference>
<dbReference type="InterPro" id="IPR002048">
    <property type="entry name" value="EF_hand_dom"/>
</dbReference>
<dbReference type="InterPro" id="IPR034325">
    <property type="entry name" value="S-100_dom"/>
</dbReference>
<dbReference type="InterPro" id="IPR001751">
    <property type="entry name" value="S100/CaBP7/8-like_CS"/>
</dbReference>
<dbReference type="InterPro" id="IPR013787">
    <property type="entry name" value="S100_Ca-bd_sub"/>
</dbReference>
<dbReference type="InterPro" id="IPR033200">
    <property type="entry name" value="TCHH"/>
</dbReference>
<dbReference type="PANTHER" id="PTHR34855">
    <property type="entry name" value="TRICHOHYALIN"/>
    <property type="match status" value="1"/>
</dbReference>
<dbReference type="PANTHER" id="PTHR34855:SF1">
    <property type="entry name" value="TRICHOHYALIN"/>
    <property type="match status" value="1"/>
</dbReference>
<dbReference type="Pfam" id="PF01023">
    <property type="entry name" value="S_100"/>
    <property type="match status" value="1"/>
</dbReference>
<dbReference type="SMART" id="SM01394">
    <property type="entry name" value="S_100"/>
    <property type="match status" value="1"/>
</dbReference>
<dbReference type="SUPFAM" id="SSF47473">
    <property type="entry name" value="EF-hand"/>
    <property type="match status" value="1"/>
</dbReference>
<dbReference type="PROSITE" id="PS00018">
    <property type="entry name" value="EF_HAND_1"/>
    <property type="match status" value="1"/>
</dbReference>
<dbReference type="PROSITE" id="PS50222">
    <property type="entry name" value="EF_HAND_2"/>
    <property type="match status" value="1"/>
</dbReference>
<dbReference type="PROSITE" id="PS00303">
    <property type="entry name" value="S100_CABP"/>
    <property type="match status" value="1"/>
</dbReference>
<accession>Q07283</accession>
<accession>Q5VUI3</accession>